<protein>
    <recommendedName>
        <fullName>Calmodulin</fullName>
        <shortName>CaM</shortName>
    </recommendedName>
</protein>
<organism>
    <name type="scientific">Chlamydomonas reinhardtii</name>
    <name type="common">Chlamydomonas smithii</name>
    <dbReference type="NCBI Taxonomy" id="3055"/>
    <lineage>
        <taxon>Eukaryota</taxon>
        <taxon>Viridiplantae</taxon>
        <taxon>Chlorophyta</taxon>
        <taxon>core chlorophytes</taxon>
        <taxon>Chlorophyceae</taxon>
        <taxon>CS clade</taxon>
        <taxon>Chlamydomonadales</taxon>
        <taxon>Chlamydomonadaceae</taxon>
        <taxon>Chlamydomonas</taxon>
    </lineage>
</organism>
<sequence>MAANTEQLTEEQIAEFKEAFALFDKDGDGTITTKELGTVMRSLGQNPTEAELQDMISEVDADGNGTIDFPEFLMLMARKMKETDHEDELREAFKVFDKDGNGFISAAELRHVMTNLGEKLSEEEVDEMIREADVDGDGQVNYEEFVRMMTSGATDDKDKKGHK</sequence>
<accession>P04352</accession>
<comment type="function">
    <text evidence="3">Calmodulin mediates the control of a large number of enzymes, ion channels and other proteins by Ca(2+). Among the enzymes to be stimulated by the calmodulin-Ca(2+) complex are a number of protein kinases and phosphatases.</text>
</comment>
<comment type="subunit">
    <text evidence="3">Associates with the spoke-associated complex containing CFAP61, CFAP91 and CFAP251; the association is calcium sensitive.</text>
</comment>
<comment type="subcellular location">
    <subcellularLocation>
        <location evidence="3">Cytoplasm</location>
        <location evidence="3">Cytoskeleton</location>
        <location evidence="3">Flagellum axoneme</location>
    </subcellularLocation>
</comment>
<comment type="PTM">
    <text>Trimethylation of Lys-119 observed in other calmodulins is absent here.</text>
</comment>
<comment type="miscellaneous">
    <text>This protein has four functional calcium-binding sites.</text>
</comment>
<comment type="miscellaneous">
    <text>This protein is unusual among eukaryotic calmodulins in having an 11-residue extension of its carboxyl end.</text>
</comment>
<comment type="similarity">
    <text evidence="4">Belongs to the calmodulin family.</text>
</comment>
<keyword id="KW-0002">3D-structure</keyword>
<keyword id="KW-0007">Acetylation</keyword>
<keyword id="KW-0106">Calcium</keyword>
<keyword id="KW-0966">Cell projection</keyword>
<keyword id="KW-0969">Cilium</keyword>
<keyword id="KW-0963">Cytoplasm</keyword>
<keyword id="KW-0206">Cytoskeleton</keyword>
<keyword id="KW-0903">Direct protein sequencing</keyword>
<keyword id="KW-0282">Flagellum</keyword>
<keyword id="KW-0479">Metal-binding</keyword>
<keyword id="KW-0677">Repeat</keyword>
<reference key="1">
    <citation type="journal article" date="1988" name="J. Biol. Chem.">
        <title>Structural organization, DNA sequence, and expression of the calmodulin gene.</title>
        <authorList>
            <person name="Zimmer W.E."/>
            <person name="Schloss J.A."/>
            <person name="Silflow C.D."/>
            <person name="Youngblom J."/>
            <person name="Watterson D.M."/>
        </authorList>
    </citation>
    <scope>NUCLEOTIDE SEQUENCE [GENOMIC DNA]</scope>
</reference>
<reference key="2">
    <citation type="journal article" date="1985" name="Plant Physiol.">
        <title>Amino acid sequence of a novel calmodulin from the unicellular alga Chlamydomonas.</title>
        <authorList>
            <person name="Lukas T.J."/>
            <person name="Wiggins M.E."/>
            <person name="Watterson D.M."/>
        </authorList>
    </citation>
    <scope>PROTEIN SEQUENCE OF 2-163</scope>
    <scope>ACETYLATION AT ALA-2</scope>
</reference>
<reference key="3">
    <citation type="journal article" date="2007" name="J. Cell Biol.">
        <title>A conserved CaM- and radial spoke associated complex mediates regulation of flagellar dynein activity.</title>
        <authorList>
            <person name="Dymek E.E."/>
            <person name="Smith E.F."/>
        </authorList>
    </citation>
    <scope>FUNCTION</scope>
    <scope>SUBCELLULAR LOCATION</scope>
    <scope>ASSOCIATED WITH THE COMPLEX CONTAINING CFAP61; CFAP91 AND CFAP251</scope>
</reference>
<proteinExistence type="evidence at protein level"/>
<feature type="initiator methionine" description="Removed" evidence="2">
    <location>
        <position position="1"/>
    </location>
</feature>
<feature type="chain" id="PRO_0000198286" description="Calmodulin">
    <location>
        <begin position="2"/>
        <end position="163"/>
    </location>
</feature>
<feature type="domain" description="EF-hand 1" evidence="1">
    <location>
        <begin position="11"/>
        <end position="46"/>
    </location>
</feature>
<feature type="domain" description="EF-hand 2" evidence="1">
    <location>
        <begin position="47"/>
        <end position="82"/>
    </location>
</feature>
<feature type="domain" description="EF-hand 3" evidence="1">
    <location>
        <begin position="84"/>
        <end position="119"/>
    </location>
</feature>
<feature type="domain" description="EF-hand 4" evidence="1">
    <location>
        <begin position="120"/>
        <end position="155"/>
    </location>
</feature>
<feature type="binding site" evidence="1">
    <location>
        <position position="24"/>
    </location>
    <ligand>
        <name>Ca(2+)</name>
        <dbReference type="ChEBI" id="CHEBI:29108"/>
        <label>1</label>
    </ligand>
</feature>
<feature type="binding site" evidence="1">
    <location>
        <position position="26"/>
    </location>
    <ligand>
        <name>Ca(2+)</name>
        <dbReference type="ChEBI" id="CHEBI:29108"/>
        <label>1</label>
    </ligand>
</feature>
<feature type="binding site" evidence="1">
    <location>
        <position position="28"/>
    </location>
    <ligand>
        <name>Ca(2+)</name>
        <dbReference type="ChEBI" id="CHEBI:29108"/>
        <label>1</label>
    </ligand>
</feature>
<feature type="binding site" evidence="1">
    <location>
        <position position="30"/>
    </location>
    <ligand>
        <name>Ca(2+)</name>
        <dbReference type="ChEBI" id="CHEBI:29108"/>
        <label>1</label>
    </ligand>
</feature>
<feature type="binding site" evidence="1">
    <location>
        <position position="35"/>
    </location>
    <ligand>
        <name>Ca(2+)</name>
        <dbReference type="ChEBI" id="CHEBI:29108"/>
        <label>1</label>
    </ligand>
</feature>
<feature type="binding site" evidence="1">
    <location>
        <position position="60"/>
    </location>
    <ligand>
        <name>Ca(2+)</name>
        <dbReference type="ChEBI" id="CHEBI:29108"/>
        <label>2</label>
    </ligand>
</feature>
<feature type="binding site" evidence="1">
    <location>
        <position position="62"/>
    </location>
    <ligand>
        <name>Ca(2+)</name>
        <dbReference type="ChEBI" id="CHEBI:29108"/>
        <label>2</label>
    </ligand>
</feature>
<feature type="binding site" evidence="1">
    <location>
        <position position="64"/>
    </location>
    <ligand>
        <name>Ca(2+)</name>
        <dbReference type="ChEBI" id="CHEBI:29108"/>
        <label>2</label>
    </ligand>
</feature>
<feature type="binding site" evidence="1">
    <location>
        <position position="66"/>
    </location>
    <ligand>
        <name>Ca(2+)</name>
        <dbReference type="ChEBI" id="CHEBI:29108"/>
        <label>2</label>
    </ligand>
</feature>
<feature type="binding site" evidence="1">
    <location>
        <position position="71"/>
    </location>
    <ligand>
        <name>Ca(2+)</name>
        <dbReference type="ChEBI" id="CHEBI:29108"/>
        <label>2</label>
    </ligand>
</feature>
<feature type="binding site" evidence="1">
    <location>
        <position position="97"/>
    </location>
    <ligand>
        <name>Ca(2+)</name>
        <dbReference type="ChEBI" id="CHEBI:29108"/>
        <label>3</label>
    </ligand>
</feature>
<feature type="binding site" evidence="1">
    <location>
        <position position="99"/>
    </location>
    <ligand>
        <name>Ca(2+)</name>
        <dbReference type="ChEBI" id="CHEBI:29108"/>
        <label>3</label>
    </ligand>
</feature>
<feature type="binding site" evidence="1">
    <location>
        <position position="101"/>
    </location>
    <ligand>
        <name>Ca(2+)</name>
        <dbReference type="ChEBI" id="CHEBI:29108"/>
        <label>3</label>
    </ligand>
</feature>
<feature type="binding site" evidence="1">
    <location>
        <position position="108"/>
    </location>
    <ligand>
        <name>Ca(2+)</name>
        <dbReference type="ChEBI" id="CHEBI:29108"/>
        <label>3</label>
    </ligand>
</feature>
<feature type="binding site" evidence="1">
    <location>
        <position position="133"/>
    </location>
    <ligand>
        <name>Ca(2+)</name>
        <dbReference type="ChEBI" id="CHEBI:29108"/>
        <label>4</label>
    </ligand>
</feature>
<feature type="binding site" evidence="1">
    <location>
        <position position="135"/>
    </location>
    <ligand>
        <name>Ca(2+)</name>
        <dbReference type="ChEBI" id="CHEBI:29108"/>
        <label>4</label>
    </ligand>
</feature>
<feature type="binding site" evidence="1">
    <location>
        <position position="137"/>
    </location>
    <ligand>
        <name>Ca(2+)</name>
        <dbReference type="ChEBI" id="CHEBI:29108"/>
        <label>4</label>
    </ligand>
</feature>
<feature type="binding site" evidence="1">
    <location>
        <position position="139"/>
    </location>
    <ligand>
        <name>Ca(2+)</name>
        <dbReference type="ChEBI" id="CHEBI:29108"/>
        <label>4</label>
    </ligand>
</feature>
<feature type="binding site" evidence="1">
    <location>
        <position position="144"/>
    </location>
    <ligand>
        <name>Ca(2+)</name>
        <dbReference type="ChEBI" id="CHEBI:29108"/>
        <label>4</label>
    </ligand>
</feature>
<feature type="modified residue" description="N-acetylalanine" evidence="2">
    <location>
        <position position="2"/>
    </location>
</feature>
<evidence type="ECO:0000255" key="1">
    <source>
        <dbReference type="PROSITE-ProRule" id="PRU00448"/>
    </source>
</evidence>
<evidence type="ECO:0000269" key="2">
    <source>
    </source>
</evidence>
<evidence type="ECO:0000269" key="3">
    <source>
    </source>
</evidence>
<evidence type="ECO:0000305" key="4"/>
<name>CALM_CHLRE</name>
<dbReference type="EMBL" id="M20729">
    <property type="protein sequence ID" value="AAA33083.1"/>
    <property type="molecule type" value="Genomic_DNA"/>
</dbReference>
<dbReference type="PIR" id="A32005">
    <property type="entry name" value="MCKM"/>
</dbReference>
<dbReference type="RefSeq" id="XP_001703420.1">
    <property type="nucleotide sequence ID" value="XM_001703368.2"/>
</dbReference>
<dbReference type="PDB" id="7JTS">
    <property type="method" value="EM"/>
    <property type="resolution" value="6.10 A"/>
    <property type="chains" value="t=1-163"/>
</dbReference>
<dbReference type="PDBsum" id="7JTS"/>
<dbReference type="SMR" id="P04352"/>
<dbReference type="iPTMnet" id="P04352"/>
<dbReference type="PaxDb" id="3055-EDP06102"/>
<dbReference type="ProMEX" id="P04352"/>
<dbReference type="EnsemblPlants" id="PNW85257">
    <property type="protein sequence ID" value="PNW85257"/>
    <property type="gene ID" value="CHLRE_03g178150v5"/>
</dbReference>
<dbReference type="GeneID" id="5728821"/>
<dbReference type="Gramene" id="PNW85257">
    <property type="protein sequence ID" value="PNW85257"/>
    <property type="gene ID" value="CHLRE_03g178150v5"/>
</dbReference>
<dbReference type="KEGG" id="cre:CHLRE_03g178150v5"/>
<dbReference type="eggNOG" id="KOG0027">
    <property type="taxonomic scope" value="Eukaryota"/>
</dbReference>
<dbReference type="HOGENOM" id="CLU_061288_2_0_1"/>
<dbReference type="OMA" id="GIRCKEW"/>
<dbReference type="OrthoDB" id="26525at2759"/>
<dbReference type="GO" id="GO:0005737">
    <property type="term" value="C:cytoplasm"/>
    <property type="evidence" value="ECO:0007669"/>
    <property type="project" value="UniProtKB-KW"/>
</dbReference>
<dbReference type="GO" id="GO:0005856">
    <property type="term" value="C:cytoskeleton"/>
    <property type="evidence" value="ECO:0007669"/>
    <property type="project" value="UniProtKB-KW"/>
</dbReference>
<dbReference type="GO" id="GO:0031514">
    <property type="term" value="C:motile cilium"/>
    <property type="evidence" value="ECO:0007669"/>
    <property type="project" value="UniProtKB-KW"/>
</dbReference>
<dbReference type="GO" id="GO:0005509">
    <property type="term" value="F:calcium ion binding"/>
    <property type="evidence" value="ECO:0007669"/>
    <property type="project" value="InterPro"/>
</dbReference>
<dbReference type="CDD" id="cd00051">
    <property type="entry name" value="EFh"/>
    <property type="match status" value="2"/>
</dbReference>
<dbReference type="FunFam" id="1.10.238.10:FF:000527">
    <property type="entry name" value="Calmodulin-3"/>
    <property type="match status" value="1"/>
</dbReference>
<dbReference type="Gene3D" id="1.10.238.10">
    <property type="entry name" value="EF-hand"/>
    <property type="match status" value="3"/>
</dbReference>
<dbReference type="InterPro" id="IPR050230">
    <property type="entry name" value="CALM/Myosin/TropC-like"/>
</dbReference>
<dbReference type="InterPro" id="IPR011992">
    <property type="entry name" value="EF-hand-dom_pair"/>
</dbReference>
<dbReference type="InterPro" id="IPR018247">
    <property type="entry name" value="EF_Hand_1_Ca_BS"/>
</dbReference>
<dbReference type="InterPro" id="IPR002048">
    <property type="entry name" value="EF_hand_dom"/>
</dbReference>
<dbReference type="PANTHER" id="PTHR23048:SF0">
    <property type="entry name" value="CALMODULIN LIKE 3"/>
    <property type="match status" value="1"/>
</dbReference>
<dbReference type="PANTHER" id="PTHR23048">
    <property type="entry name" value="MYOSIN LIGHT CHAIN 1, 3"/>
    <property type="match status" value="1"/>
</dbReference>
<dbReference type="Pfam" id="PF13499">
    <property type="entry name" value="EF-hand_7"/>
    <property type="match status" value="2"/>
</dbReference>
<dbReference type="SMART" id="SM00054">
    <property type="entry name" value="EFh"/>
    <property type="match status" value="4"/>
</dbReference>
<dbReference type="SUPFAM" id="SSF47473">
    <property type="entry name" value="EF-hand"/>
    <property type="match status" value="1"/>
</dbReference>
<dbReference type="PROSITE" id="PS00018">
    <property type="entry name" value="EF_HAND_1"/>
    <property type="match status" value="4"/>
</dbReference>
<dbReference type="PROSITE" id="PS50222">
    <property type="entry name" value="EF_HAND_2"/>
    <property type="match status" value="4"/>
</dbReference>